<sequence length="568" mass="60933">MLKSQIAPIPSYESQPVHKPSSSVNFITFNQDGSCIAVGNNKGYSIFTTNPFTKCYDSPPGEAIGIVEMLYSTSLVVVVALGEETGSSPRKLKIINTKRGSTICDLVFPSTILKVKLTRSRMIVLLEEQIYLYDISTMKLLHTIETSPNMAGICAISADQGSTDTSNSADNSGSIGSGPASGSGAGSGSASMTSTDSTPDAQSHSYLAYPSPPKTAMHDSLLVAGINTNGGSHSKQNNIQSVSNAPNRVGDVIIFDTDSLQPLCVIEAHKSALAAISLSSDGRLLATASDKGTIVRVFSVSTGAKLYQFRRGTYPTKVYSVAFSPDNRYVVTTSASGTVHIFRLGEDESLESKHKRKRASRQHETIAEETSATQDLDDEIEDDGDDSDVDDVESLEVVPSKQRKLSQGSSNSYTSMNSGISGMSEDGKEPKIDPIVDHARLSVARMIRRSSQTLGRKAAQKMGDFLPSKFASILEPTRHFASLKIASASKDVKSIAVLDSQVVHDMVPQMFLHSKDAAPASALDTQSMTEMALLHIFVVTSDGYLYVYGLDPERGGDCILLQQHSFDI</sequence>
<accession>A5DHI9</accession>
<proteinExistence type="inferred from homology"/>
<reference key="1">
    <citation type="journal article" date="2009" name="Nature">
        <title>Evolution of pathogenicity and sexual reproduction in eight Candida genomes.</title>
        <authorList>
            <person name="Butler G."/>
            <person name="Rasmussen M.D."/>
            <person name="Lin M.F."/>
            <person name="Santos M.A.S."/>
            <person name="Sakthikumar S."/>
            <person name="Munro C.A."/>
            <person name="Rheinbay E."/>
            <person name="Grabherr M."/>
            <person name="Forche A."/>
            <person name="Reedy J.L."/>
            <person name="Agrafioti I."/>
            <person name="Arnaud M.B."/>
            <person name="Bates S."/>
            <person name="Brown A.J.P."/>
            <person name="Brunke S."/>
            <person name="Costanzo M.C."/>
            <person name="Fitzpatrick D.A."/>
            <person name="de Groot P.W.J."/>
            <person name="Harris D."/>
            <person name="Hoyer L.L."/>
            <person name="Hube B."/>
            <person name="Klis F.M."/>
            <person name="Kodira C."/>
            <person name="Lennard N."/>
            <person name="Logue M.E."/>
            <person name="Martin R."/>
            <person name="Neiman A.M."/>
            <person name="Nikolaou E."/>
            <person name="Quail M.A."/>
            <person name="Quinn J."/>
            <person name="Santos M.C."/>
            <person name="Schmitzberger F.F."/>
            <person name="Sherlock G."/>
            <person name="Shah P."/>
            <person name="Silverstein K.A.T."/>
            <person name="Skrzypek M.S."/>
            <person name="Soll D."/>
            <person name="Staggs R."/>
            <person name="Stansfield I."/>
            <person name="Stumpf M.P.H."/>
            <person name="Sudbery P.E."/>
            <person name="Srikantha T."/>
            <person name="Zeng Q."/>
            <person name="Berman J."/>
            <person name="Berriman M."/>
            <person name="Heitman J."/>
            <person name="Gow N.A.R."/>
            <person name="Lorenz M.C."/>
            <person name="Birren B.W."/>
            <person name="Kellis M."/>
            <person name="Cuomo C.A."/>
        </authorList>
    </citation>
    <scope>NUCLEOTIDE SEQUENCE [LARGE SCALE GENOMIC DNA]</scope>
    <source>
        <strain>ATCC 6260 / CBS 566 / DSM 6381 / JCM 1539 / NBRC 10279 / NRRL Y-324</strain>
    </source>
</reference>
<protein>
    <recommendedName>
        <fullName>Autophagy-related protein 18</fullName>
    </recommendedName>
</protein>
<comment type="function">
    <text evidence="1">The PI(3,5)P2 regulatory complex regulates both the synthesis and turnover of phosphatidylinositol 3,5-bisphosphate (PtdIns(3,5)P2). Necessary for proper vacuole morphology. Plays an important role in osmotically-induced vacuole fragmentation. Required for cytoplasm to vacuole transport (Cvt) vesicle formation, pexophagy and starvation-induced autophagy. Involved in correct ATG9 trafficking to the pre-autophagosomal structure. Might also be involved in premeiotic DNA replication (By similarity).</text>
</comment>
<comment type="subunit">
    <text evidence="1">Component of the PI(3,5)P2 regulatory complex.</text>
</comment>
<comment type="subcellular location">
    <subcellularLocation>
        <location evidence="1">Preautophagosomal structure membrane</location>
        <topology evidence="1">Peripheral membrane protein</topology>
    </subcellularLocation>
    <subcellularLocation>
        <location evidence="1">Vacuole membrane</location>
        <topology evidence="1">Peripheral membrane protein</topology>
    </subcellularLocation>
    <subcellularLocation>
        <location evidence="1">Endosome membrane</location>
        <topology evidence="1">Peripheral membrane protein</topology>
    </subcellularLocation>
</comment>
<comment type="domain">
    <text evidence="1">The N-terminus might form a beta-propeller domain involved in specific binding to phosphatidylinositol 3,5-bisphosphate (PIP2), leading to the association of the protein to the membrane.</text>
</comment>
<comment type="domain">
    <text evidence="2">The L/FRRG motif is essential for the cytoplasm to vacuole transport (Cvt) pathway, for the recruitment of ATG8 and ATG16 to the PAS in nutrient-rich medium, and for its recruitment to and dissociation from the PAS under starvation conditions.</text>
</comment>
<comment type="similarity">
    <text evidence="4">Belongs to the WD repeat PROPPIN family.</text>
</comment>
<organism>
    <name type="scientific">Meyerozyma guilliermondii (strain ATCC 6260 / CBS 566 / DSM 6381 / JCM 1539 / NBRC 10279 / NRRL Y-324)</name>
    <name type="common">Yeast</name>
    <name type="synonym">Candida guilliermondii</name>
    <dbReference type="NCBI Taxonomy" id="294746"/>
    <lineage>
        <taxon>Eukaryota</taxon>
        <taxon>Fungi</taxon>
        <taxon>Dikarya</taxon>
        <taxon>Ascomycota</taxon>
        <taxon>Saccharomycotina</taxon>
        <taxon>Pichiomycetes</taxon>
        <taxon>Debaryomycetaceae</taxon>
        <taxon>Meyerozyma</taxon>
    </lineage>
</organism>
<feature type="chain" id="PRO_0000318006" description="Autophagy-related protein 18">
    <location>
        <begin position="1"/>
        <end position="568"/>
    </location>
</feature>
<feature type="repeat" description="WD 1">
    <location>
        <begin position="19"/>
        <end position="57"/>
    </location>
</feature>
<feature type="repeat" description="WD 2">
    <location>
        <begin position="268"/>
        <end position="308"/>
    </location>
</feature>
<feature type="repeat" description="WD 3">
    <location>
        <begin position="313"/>
        <end position="352"/>
    </location>
</feature>
<feature type="repeat" description="WD 4">
    <location>
        <begin position="464"/>
        <end position="508"/>
    </location>
</feature>
<feature type="repeat" description="WD 5">
    <location>
        <begin position="518"/>
        <end position="558"/>
    </location>
</feature>
<feature type="region of interest" description="Disordered" evidence="3">
    <location>
        <begin position="162"/>
        <end position="210"/>
    </location>
</feature>
<feature type="region of interest" description="Disordered" evidence="3">
    <location>
        <begin position="350"/>
        <end position="429"/>
    </location>
</feature>
<feature type="short sequence motif" description="L/FRRG motif" evidence="2">
    <location>
        <begin position="309"/>
        <end position="313"/>
    </location>
</feature>
<feature type="compositionally biased region" description="Polar residues" evidence="3">
    <location>
        <begin position="162"/>
        <end position="171"/>
    </location>
</feature>
<feature type="compositionally biased region" description="Gly residues" evidence="3">
    <location>
        <begin position="175"/>
        <end position="187"/>
    </location>
</feature>
<feature type="compositionally biased region" description="Low complexity" evidence="3">
    <location>
        <begin position="188"/>
        <end position="198"/>
    </location>
</feature>
<feature type="compositionally biased region" description="Acidic residues" evidence="3">
    <location>
        <begin position="375"/>
        <end position="394"/>
    </location>
</feature>
<feature type="compositionally biased region" description="Polar residues" evidence="3">
    <location>
        <begin position="405"/>
        <end position="421"/>
    </location>
</feature>
<evidence type="ECO:0000250" key="1"/>
<evidence type="ECO:0000250" key="2">
    <source>
        <dbReference type="UniProtKB" id="P43601"/>
    </source>
</evidence>
<evidence type="ECO:0000256" key="3">
    <source>
        <dbReference type="SAM" id="MobiDB-lite"/>
    </source>
</evidence>
<evidence type="ECO:0000305" key="4"/>
<keyword id="KW-0072">Autophagy</keyword>
<keyword id="KW-0967">Endosome</keyword>
<keyword id="KW-0472">Membrane</keyword>
<keyword id="KW-0653">Protein transport</keyword>
<keyword id="KW-1185">Reference proteome</keyword>
<keyword id="KW-0677">Repeat</keyword>
<keyword id="KW-0813">Transport</keyword>
<keyword id="KW-0926">Vacuole</keyword>
<keyword id="KW-0853">WD repeat</keyword>
<name>ATG18_PICGU</name>
<gene>
    <name type="primary">ATG18</name>
    <name type="ORF">PGUG_02740</name>
</gene>
<dbReference type="EMBL" id="CH408157">
    <property type="protein sequence ID" value="EDK38642.2"/>
    <property type="molecule type" value="Genomic_DNA"/>
</dbReference>
<dbReference type="RefSeq" id="XP_001485011.1">
    <property type="nucleotide sequence ID" value="XM_001484961.1"/>
</dbReference>
<dbReference type="SMR" id="A5DHI9"/>
<dbReference type="FunCoup" id="A5DHI9">
    <property type="interactions" value="560"/>
</dbReference>
<dbReference type="STRING" id="294746.A5DHI9"/>
<dbReference type="GeneID" id="5126886"/>
<dbReference type="KEGG" id="pgu:PGUG_02740"/>
<dbReference type="VEuPathDB" id="FungiDB:PGUG_02740"/>
<dbReference type="eggNOG" id="KOG2110">
    <property type="taxonomic scope" value="Eukaryota"/>
</dbReference>
<dbReference type="HOGENOM" id="CLU_025895_5_2_1"/>
<dbReference type="InParanoid" id="A5DHI9"/>
<dbReference type="OMA" id="KTMGRMI"/>
<dbReference type="OrthoDB" id="1667587at2759"/>
<dbReference type="Proteomes" id="UP000001997">
    <property type="component" value="Unassembled WGS sequence"/>
</dbReference>
<dbReference type="GO" id="GO:0005829">
    <property type="term" value="C:cytosol"/>
    <property type="evidence" value="ECO:0007669"/>
    <property type="project" value="EnsemblFungi"/>
</dbReference>
<dbReference type="GO" id="GO:0010008">
    <property type="term" value="C:endosome membrane"/>
    <property type="evidence" value="ECO:0007669"/>
    <property type="project" value="UniProtKB-SubCell"/>
</dbReference>
<dbReference type="GO" id="GO:0000329">
    <property type="term" value="C:fungal-type vacuole membrane"/>
    <property type="evidence" value="ECO:0007669"/>
    <property type="project" value="EnsemblFungi"/>
</dbReference>
<dbReference type="GO" id="GO:0070772">
    <property type="term" value="C:PAS complex"/>
    <property type="evidence" value="ECO:0007669"/>
    <property type="project" value="EnsemblFungi"/>
</dbReference>
<dbReference type="GO" id="GO:0061908">
    <property type="term" value="C:phagophore"/>
    <property type="evidence" value="ECO:0007669"/>
    <property type="project" value="EnsemblFungi"/>
</dbReference>
<dbReference type="GO" id="GO:0034045">
    <property type="term" value="C:phagophore assembly site membrane"/>
    <property type="evidence" value="ECO:0007669"/>
    <property type="project" value="UniProtKB-SubCell"/>
</dbReference>
<dbReference type="GO" id="GO:0080025">
    <property type="term" value="F:phosphatidylinositol-3,5-bisphosphate binding"/>
    <property type="evidence" value="ECO:0007669"/>
    <property type="project" value="EnsemblFungi"/>
</dbReference>
<dbReference type="GO" id="GO:0032266">
    <property type="term" value="F:phosphatidylinositol-3-phosphate binding"/>
    <property type="evidence" value="ECO:0007669"/>
    <property type="project" value="EnsemblFungi"/>
</dbReference>
<dbReference type="GO" id="GO:0070273">
    <property type="term" value="F:phosphatidylinositol-4-phosphate binding"/>
    <property type="evidence" value="ECO:0007669"/>
    <property type="project" value="EnsemblFungi"/>
</dbReference>
<dbReference type="GO" id="GO:0043130">
    <property type="term" value="F:ubiquitin binding"/>
    <property type="evidence" value="ECO:0007669"/>
    <property type="project" value="EnsemblFungi"/>
</dbReference>
<dbReference type="GO" id="GO:0032258">
    <property type="term" value="P:cytoplasm to vacuole targeting by the Cvt pathway"/>
    <property type="evidence" value="ECO:0007669"/>
    <property type="project" value="EnsemblFungi"/>
</dbReference>
<dbReference type="GO" id="GO:0045324">
    <property type="term" value="P:late endosome to vacuole transport"/>
    <property type="evidence" value="ECO:0007669"/>
    <property type="project" value="EnsemblFungi"/>
</dbReference>
<dbReference type="GO" id="GO:0000425">
    <property type="term" value="P:pexophagy"/>
    <property type="evidence" value="ECO:0007669"/>
    <property type="project" value="EnsemblFungi"/>
</dbReference>
<dbReference type="GO" id="GO:0034727">
    <property type="term" value="P:piecemeal microautophagy of the nucleus"/>
    <property type="evidence" value="ECO:0007669"/>
    <property type="project" value="EnsemblFungi"/>
</dbReference>
<dbReference type="GO" id="GO:0044090">
    <property type="term" value="P:positive regulation of vacuole organization"/>
    <property type="evidence" value="ECO:0007669"/>
    <property type="project" value="EnsemblFungi"/>
</dbReference>
<dbReference type="GO" id="GO:0006624">
    <property type="term" value="P:vacuolar protein processing"/>
    <property type="evidence" value="ECO:0007669"/>
    <property type="project" value="EnsemblFungi"/>
</dbReference>
<dbReference type="Gene3D" id="2.130.10.10">
    <property type="entry name" value="YVTN repeat-like/Quinoprotein amine dehydrogenase"/>
    <property type="match status" value="1"/>
</dbReference>
<dbReference type="InterPro" id="IPR048720">
    <property type="entry name" value="PROPPIN"/>
</dbReference>
<dbReference type="InterPro" id="IPR015943">
    <property type="entry name" value="WD40/YVTN_repeat-like_dom_sf"/>
</dbReference>
<dbReference type="InterPro" id="IPR036322">
    <property type="entry name" value="WD40_repeat_dom_sf"/>
</dbReference>
<dbReference type="InterPro" id="IPR001680">
    <property type="entry name" value="WD40_rpt"/>
</dbReference>
<dbReference type="PANTHER" id="PTHR11227">
    <property type="entry name" value="WD-REPEAT PROTEIN INTERACTING WITH PHOSPHOINOSIDES WIPI -RELATED"/>
    <property type="match status" value="1"/>
</dbReference>
<dbReference type="Pfam" id="PF21032">
    <property type="entry name" value="PROPPIN"/>
    <property type="match status" value="2"/>
</dbReference>
<dbReference type="SMART" id="SM00320">
    <property type="entry name" value="WD40"/>
    <property type="match status" value="3"/>
</dbReference>
<dbReference type="SUPFAM" id="SSF50978">
    <property type="entry name" value="WD40 repeat-like"/>
    <property type="match status" value="1"/>
</dbReference>
<dbReference type="PROSITE" id="PS50082">
    <property type="entry name" value="WD_REPEATS_2"/>
    <property type="match status" value="1"/>
</dbReference>
<dbReference type="PROSITE" id="PS50294">
    <property type="entry name" value="WD_REPEATS_REGION"/>
    <property type="match status" value="1"/>
</dbReference>